<feature type="signal peptide" evidence="3">
    <location>
        <begin position="1"/>
        <end position="23"/>
    </location>
</feature>
<feature type="chain" id="PRO_0000005782" description="Collagen alpha-1(XII) chain">
    <location>
        <begin position="24"/>
        <end position="3124"/>
    </location>
</feature>
<feature type="domain" description="Fibronectin type-III 1" evidence="5">
    <location>
        <begin position="27"/>
        <end position="117"/>
    </location>
</feature>
<feature type="domain" description="VWFA 1" evidence="4">
    <location>
        <begin position="139"/>
        <end position="311"/>
    </location>
</feature>
<feature type="domain" description="Fibronectin type-III 2" evidence="5">
    <location>
        <begin position="335"/>
        <end position="424"/>
    </location>
</feature>
<feature type="domain" description="VWFA 2" evidence="4">
    <location>
        <begin position="439"/>
        <end position="615"/>
    </location>
</feature>
<feature type="domain" description="Fibronectin type-III 3" evidence="5">
    <location>
        <begin position="633"/>
        <end position="722"/>
    </location>
</feature>
<feature type="domain" description="Fibronectin type-III 4" evidence="5">
    <location>
        <begin position="724"/>
        <end position="815"/>
    </location>
</feature>
<feature type="domain" description="Fibronectin type-III 5" evidence="5">
    <location>
        <begin position="816"/>
        <end position="906"/>
    </location>
</feature>
<feature type="domain" description="Fibronectin type-III 6" evidence="5">
    <location>
        <begin position="908"/>
        <end position="998"/>
    </location>
</feature>
<feature type="domain" description="Fibronectin type-III 7" evidence="5">
    <location>
        <begin position="999"/>
        <end position="1087"/>
    </location>
</feature>
<feature type="domain" description="Fibronectin type-III 8" evidence="5">
    <location>
        <begin position="1089"/>
        <end position="1179"/>
    </location>
</feature>
<feature type="domain" description="VWFA 3" evidence="4">
    <location>
        <begin position="1199"/>
        <end position="1371"/>
    </location>
</feature>
<feature type="domain" description="Fibronectin type-III 9" evidence="5">
    <location>
        <begin position="1387"/>
        <end position="1476"/>
    </location>
</feature>
<feature type="domain" description="Fibronectin type-III 10" evidence="5">
    <location>
        <begin position="1477"/>
        <end position="1568"/>
    </location>
</feature>
<feature type="domain" description="Fibronectin type-III 11" evidence="5">
    <location>
        <begin position="1569"/>
        <end position="1659"/>
    </location>
</feature>
<feature type="domain" description="Fibronectin type-III 12" evidence="5">
    <location>
        <begin position="1660"/>
        <end position="1756"/>
    </location>
</feature>
<feature type="domain" description="Fibronectin type-III 13" evidence="5">
    <location>
        <begin position="1759"/>
        <end position="1853"/>
    </location>
</feature>
<feature type="domain" description="Fibronectin type-III 14" evidence="5">
    <location>
        <begin position="1854"/>
        <end position="1939"/>
    </location>
</feature>
<feature type="domain" description="Fibronectin type-III 15" evidence="5">
    <location>
        <begin position="1940"/>
        <end position="2030"/>
    </location>
</feature>
<feature type="domain" description="Fibronectin type-III 16" evidence="5">
    <location>
        <begin position="2031"/>
        <end position="2121"/>
    </location>
</feature>
<feature type="domain" description="Fibronectin type-III 17" evidence="5">
    <location>
        <begin position="2122"/>
        <end position="2210"/>
    </location>
</feature>
<feature type="domain" description="Fibronectin type-III 18" evidence="5">
    <location>
        <begin position="2211"/>
        <end position="2299"/>
    </location>
</feature>
<feature type="domain" description="VWFA 4" evidence="4">
    <location>
        <begin position="2327"/>
        <end position="2500"/>
    </location>
</feature>
<feature type="domain" description="Laminin G-like">
    <location>
        <begin position="2524"/>
        <end position="2716"/>
    </location>
</feature>
<feature type="domain" description="Collagen-like 1">
    <location>
        <begin position="2751"/>
        <end position="2802"/>
    </location>
</feature>
<feature type="domain" description="Collagen-like 2">
    <location>
        <begin position="2807"/>
        <end position="2858"/>
    </location>
</feature>
<feature type="domain" description="Collagen-like 3">
    <location>
        <begin position="2859"/>
        <end position="2900"/>
    </location>
</feature>
<feature type="domain" description="Collagen-like 4">
    <location>
        <begin position="2945"/>
        <end position="2994"/>
    </location>
</feature>
<feature type="region of interest" description="Disordered" evidence="6">
    <location>
        <begin position="1075"/>
        <end position="1100"/>
    </location>
</feature>
<feature type="region of interest" description="Nonhelical region (NC3)">
    <location>
        <begin position="2455"/>
        <end position="2750"/>
    </location>
</feature>
<feature type="region of interest" description="Disordered" evidence="6">
    <location>
        <begin position="2749"/>
        <end position="2900"/>
    </location>
</feature>
<feature type="region of interest" description="Triple-helical region (COL2) with 1 imperfection">
    <location>
        <begin position="2751"/>
        <end position="2902"/>
    </location>
</feature>
<feature type="region of interest" description="Nonhelical region (NC2)">
    <location>
        <begin position="2903"/>
        <end position="2945"/>
    </location>
</feature>
<feature type="region of interest" description="Disordered" evidence="6">
    <location>
        <begin position="2935"/>
        <end position="3080"/>
    </location>
</feature>
<feature type="region of interest" description="Triple-helical region (COL1) with 2 imperfections">
    <location>
        <begin position="2946"/>
        <end position="3048"/>
    </location>
</feature>
<feature type="region of interest" description="Nonhelical region (NC1)">
    <location>
        <begin position="3049"/>
        <end position="3124"/>
    </location>
</feature>
<feature type="short sequence motif" description="Cell attachment site" evidence="3">
    <location>
        <begin position="2899"/>
        <end position="2901"/>
    </location>
</feature>
<feature type="compositionally biased region" description="Pro residues" evidence="6">
    <location>
        <begin position="2752"/>
        <end position="2761"/>
    </location>
</feature>
<feature type="compositionally biased region" description="Pro residues" evidence="6">
    <location>
        <begin position="2788"/>
        <end position="2798"/>
    </location>
</feature>
<feature type="compositionally biased region" description="Low complexity" evidence="6">
    <location>
        <begin position="2821"/>
        <end position="2830"/>
    </location>
</feature>
<feature type="compositionally biased region" description="Pro residues" evidence="6">
    <location>
        <begin position="2832"/>
        <end position="2841"/>
    </location>
</feature>
<feature type="compositionally biased region" description="Low complexity" evidence="6">
    <location>
        <begin position="2842"/>
        <end position="2854"/>
    </location>
</feature>
<feature type="compositionally biased region" description="Low complexity" evidence="6">
    <location>
        <begin position="2865"/>
        <end position="2878"/>
    </location>
</feature>
<feature type="compositionally biased region" description="Polar residues" evidence="6">
    <location>
        <begin position="2935"/>
        <end position="2944"/>
    </location>
</feature>
<feature type="compositionally biased region" description="Pro residues" evidence="6">
    <location>
        <begin position="2945"/>
        <end position="2954"/>
    </location>
</feature>
<feature type="compositionally biased region" description="Gly residues" evidence="6">
    <location>
        <begin position="2961"/>
        <end position="2970"/>
    </location>
</feature>
<feature type="compositionally biased region" description="Low complexity" evidence="6">
    <location>
        <begin position="3010"/>
        <end position="3024"/>
    </location>
</feature>
<feature type="glycosylation site" description="N-linked (GlcNAc...) asparagine" evidence="3">
    <location>
        <position position="32"/>
    </location>
</feature>
<feature type="glycosylation site" description="O-linked (Xyl...) (chondroitin sulfate) serine" evidence="2">
    <location>
        <position position="328"/>
    </location>
</feature>
<feature type="glycosylation site" description="O-linked (Xyl...) (chondroitin sulfate) serine" evidence="3">
    <location>
        <position position="797"/>
    </location>
</feature>
<feature type="glycosylation site" description="O-linked (Xyl...) (chondroitin sulfate) serine" evidence="3">
    <location>
        <position position="890"/>
    </location>
</feature>
<feature type="glycosylation site" description="O-linked (Xyl...) (chondroitin sulfate) serine" evidence="3">
    <location>
        <position position="981"/>
    </location>
</feature>
<feature type="glycosylation site" description="N-linked (GlcNAc...) asparagine" evidence="3">
    <location>
        <position position="1006"/>
    </location>
</feature>
<feature type="glycosylation site" description="N-linked (GlcNAc...) asparagine" evidence="3">
    <location>
        <position position="1032"/>
    </location>
</feature>
<feature type="glycosylation site" description="N-linked (GlcNAc...) asparagine" evidence="3">
    <location>
        <position position="1044"/>
    </location>
</feature>
<feature type="glycosylation site" description="N-linked (GlcNAc...) asparagine" evidence="3">
    <location>
        <position position="1512"/>
    </location>
</feature>
<feature type="glycosylation site" description="N-linked (GlcNAc...) asparagine" evidence="3">
    <location>
        <position position="1767"/>
    </location>
</feature>
<feature type="glycosylation site" description="N-linked (GlcNAc...) asparagine" evidence="3">
    <location>
        <position position="2210"/>
    </location>
</feature>
<feature type="glycosylation site" description="N-linked (GlcNAc...) asparagine" evidence="3">
    <location>
        <position position="2273"/>
    </location>
</feature>
<feature type="glycosylation site" description="N-linked (GlcNAc...) asparagine" evidence="3">
    <location>
        <position position="2532"/>
    </location>
</feature>
<feature type="glycosylation site" description="N-linked (GlcNAc...) asparagine" evidence="3">
    <location>
        <position position="2683"/>
    </location>
</feature>
<feature type="splice variant" id="VSP_001148" description="In isoform Short." evidence="7">
    <location>
        <begin position="25"/>
        <end position="1188"/>
    </location>
</feature>
<feature type="sequence conflict" description="In Ref. 4; CAA47744." evidence="8" ref="4">
    <original>T</original>
    <variation>S</variation>
    <location>
        <position position="1258"/>
    </location>
</feature>
<feature type="sequence conflict" description="In Ref. 4; CAA47744." evidence="8" ref="4">
    <original>D</original>
    <variation>E</variation>
    <location>
        <position position="1264"/>
    </location>
</feature>
<feature type="sequence conflict" description="In Ref. 2; AAA48635." evidence="8" ref="2">
    <original>P</original>
    <variation>A</variation>
    <location>
        <position position="2759"/>
    </location>
</feature>
<feature type="sequence conflict" description="In Ref. 2; AAA48635." evidence="8" ref="2">
    <original>L</original>
    <variation>F</variation>
    <location>
        <position position="2803"/>
    </location>
</feature>
<feature type="sequence conflict" description="In Ref. 2; AAA48635 and 3; AAA48718." evidence="8" ref="2 3">
    <original>V</original>
    <variation>F</variation>
    <location>
        <position position="2977"/>
    </location>
</feature>
<feature type="sequence conflict" description="In Ref. 3; AAA48718." evidence="8" ref="3">
    <original>QP</original>
    <variation>AG</variation>
    <location>
        <begin position="3075"/>
        <end position="3076"/>
    </location>
</feature>
<evidence type="ECO:0000250" key="1"/>
<evidence type="ECO:0000250" key="2">
    <source>
        <dbReference type="UniProtKB" id="Q99715"/>
    </source>
</evidence>
<evidence type="ECO:0000255" key="3"/>
<evidence type="ECO:0000255" key="4">
    <source>
        <dbReference type="PROSITE-ProRule" id="PRU00219"/>
    </source>
</evidence>
<evidence type="ECO:0000255" key="5">
    <source>
        <dbReference type="PROSITE-ProRule" id="PRU00316"/>
    </source>
</evidence>
<evidence type="ECO:0000256" key="6">
    <source>
        <dbReference type="SAM" id="MobiDB-lite"/>
    </source>
</evidence>
<evidence type="ECO:0000303" key="7">
    <source>
    </source>
</evidence>
<evidence type="ECO:0000305" key="8"/>
<organism>
    <name type="scientific">Gallus gallus</name>
    <name type="common">Chicken</name>
    <dbReference type="NCBI Taxonomy" id="9031"/>
    <lineage>
        <taxon>Eukaryota</taxon>
        <taxon>Metazoa</taxon>
        <taxon>Chordata</taxon>
        <taxon>Craniata</taxon>
        <taxon>Vertebrata</taxon>
        <taxon>Euteleostomi</taxon>
        <taxon>Archelosauria</taxon>
        <taxon>Archosauria</taxon>
        <taxon>Dinosauria</taxon>
        <taxon>Saurischia</taxon>
        <taxon>Theropoda</taxon>
        <taxon>Coelurosauria</taxon>
        <taxon>Aves</taxon>
        <taxon>Neognathae</taxon>
        <taxon>Galloanserae</taxon>
        <taxon>Galliformes</taxon>
        <taxon>Phasianidae</taxon>
        <taxon>Phasianinae</taxon>
        <taxon>Gallus</taxon>
    </lineage>
</organism>
<name>COCA1_CHICK</name>
<accession>P13944</accession>
<accession>Q04509</accession>
<dbReference type="EMBL" id="D00824">
    <property type="protein sequence ID" value="BAA00701.1"/>
    <property type="molecule type" value="mRNA"/>
</dbReference>
<dbReference type="EMBL" id="X61024">
    <property type="protein sequence ID" value="CAA43358.1"/>
    <property type="molecule type" value="mRNA"/>
</dbReference>
<dbReference type="EMBL" id="J05137">
    <property type="protein sequence ID" value="AAA48635.1"/>
    <property type="molecule type" value="mRNA"/>
</dbReference>
<dbReference type="EMBL" id="M17375">
    <property type="protein sequence ID" value="AAA48718.1"/>
    <property type="molecule type" value="mRNA"/>
</dbReference>
<dbReference type="EMBL" id="X67327">
    <property type="protein sequence ID" value="CAA47744.1"/>
    <property type="molecule type" value="mRNA"/>
</dbReference>
<dbReference type="PIR" id="A40020">
    <property type="entry name" value="A40020"/>
</dbReference>
<dbReference type="SMR" id="P13944"/>
<dbReference type="ComplexPortal" id="CPX-3109">
    <property type="entry name" value="Collagen type XII trimer"/>
</dbReference>
<dbReference type="FunCoup" id="P13944">
    <property type="interactions" value="504"/>
</dbReference>
<dbReference type="STRING" id="9031.ENSGALP00000060841"/>
<dbReference type="GlyCosmos" id="P13944">
    <property type="glycosylation" value="13 sites, No reported glycans"/>
</dbReference>
<dbReference type="GlyGen" id="P13944">
    <property type="glycosylation" value="19 sites"/>
</dbReference>
<dbReference type="PaxDb" id="9031-ENSGALP00000025593"/>
<dbReference type="VEuPathDB" id="HostDB:geneid_395875"/>
<dbReference type="eggNOG" id="KOG3544">
    <property type="taxonomic scope" value="Eukaryota"/>
</dbReference>
<dbReference type="InParanoid" id="P13944"/>
<dbReference type="PhylomeDB" id="P13944"/>
<dbReference type="Proteomes" id="UP000000539">
    <property type="component" value="Unassembled WGS sequence"/>
</dbReference>
<dbReference type="GO" id="GO:0005581">
    <property type="term" value="C:collagen trimer"/>
    <property type="evidence" value="ECO:0007669"/>
    <property type="project" value="UniProtKB-KW"/>
</dbReference>
<dbReference type="GO" id="GO:0005576">
    <property type="term" value="C:extracellular region"/>
    <property type="evidence" value="ECO:0007669"/>
    <property type="project" value="UniProtKB-KW"/>
</dbReference>
<dbReference type="GO" id="GO:0007155">
    <property type="term" value="P:cell adhesion"/>
    <property type="evidence" value="ECO:0007669"/>
    <property type="project" value="UniProtKB-KW"/>
</dbReference>
<dbReference type="GO" id="GO:0035987">
    <property type="term" value="P:endodermal cell differentiation"/>
    <property type="evidence" value="ECO:0000318"/>
    <property type="project" value="GO_Central"/>
</dbReference>
<dbReference type="CDD" id="cd00063">
    <property type="entry name" value="FN3"/>
    <property type="match status" value="18"/>
</dbReference>
<dbReference type="CDD" id="cd01482">
    <property type="entry name" value="vWA_collagen_alphaI-XII-like"/>
    <property type="match status" value="4"/>
</dbReference>
<dbReference type="FunFam" id="2.60.40.10:FF:000018">
    <property type="entry name" value="collagen alpha-1(XII) chain isoform X1"/>
    <property type="match status" value="3"/>
</dbReference>
<dbReference type="FunFam" id="2.60.40.10:FF:000489">
    <property type="entry name" value="collagen alpha-1(XII) chain isoform X1"/>
    <property type="match status" value="1"/>
</dbReference>
<dbReference type="FunFam" id="2.60.40.10:FF:000554">
    <property type="entry name" value="collagen alpha-1(XII) chain isoform X1"/>
    <property type="match status" value="1"/>
</dbReference>
<dbReference type="FunFam" id="2.60.40.10:FF:000639">
    <property type="entry name" value="collagen alpha-1(XII) chain isoform X1"/>
    <property type="match status" value="1"/>
</dbReference>
<dbReference type="FunFam" id="2.60.40.10:FF:000704">
    <property type="entry name" value="collagen alpha-1(XII) chain isoform X1"/>
    <property type="match status" value="1"/>
</dbReference>
<dbReference type="FunFam" id="2.60.40.10:FF:000816">
    <property type="entry name" value="collagen alpha-1(XII) chain isoform X2"/>
    <property type="match status" value="1"/>
</dbReference>
<dbReference type="FunFam" id="2.60.120.200:FF:000008">
    <property type="entry name" value="Collagen type XII alpha 1 chain"/>
    <property type="match status" value="1"/>
</dbReference>
<dbReference type="FunFam" id="2.60.40.10:FF:000121">
    <property type="entry name" value="Collagen type XII alpha 1 chain"/>
    <property type="match status" value="3"/>
</dbReference>
<dbReference type="FunFam" id="2.60.40.10:FF:000234">
    <property type="entry name" value="Collagen, type XII, alpha 1"/>
    <property type="match status" value="3"/>
</dbReference>
<dbReference type="FunFam" id="2.60.40.10:FF:000480">
    <property type="entry name" value="Collagen, type XII, alpha 1"/>
    <property type="match status" value="1"/>
</dbReference>
<dbReference type="FunFam" id="3.40.50.410:FF:000001">
    <property type="entry name" value="Collagen, type XII, alpha 1"/>
    <property type="match status" value="4"/>
</dbReference>
<dbReference type="Gene3D" id="2.60.120.200">
    <property type="match status" value="1"/>
</dbReference>
<dbReference type="Gene3D" id="2.60.40.10">
    <property type="entry name" value="Immunoglobulins"/>
    <property type="match status" value="18"/>
</dbReference>
<dbReference type="Gene3D" id="3.40.50.410">
    <property type="entry name" value="von Willebrand factor, type A domain"/>
    <property type="match status" value="4"/>
</dbReference>
<dbReference type="InterPro" id="IPR008160">
    <property type="entry name" value="Collagen"/>
</dbReference>
<dbReference type="InterPro" id="IPR013320">
    <property type="entry name" value="ConA-like_dom_sf"/>
</dbReference>
<dbReference type="InterPro" id="IPR050525">
    <property type="entry name" value="ECM_Assembly_Org"/>
</dbReference>
<dbReference type="InterPro" id="IPR003961">
    <property type="entry name" value="FN3_dom"/>
</dbReference>
<dbReference type="InterPro" id="IPR036116">
    <property type="entry name" value="FN3_sf"/>
</dbReference>
<dbReference type="InterPro" id="IPR013783">
    <property type="entry name" value="Ig-like_fold"/>
</dbReference>
<dbReference type="InterPro" id="IPR048287">
    <property type="entry name" value="TSPN-like_N"/>
</dbReference>
<dbReference type="InterPro" id="IPR002035">
    <property type="entry name" value="VWF_A"/>
</dbReference>
<dbReference type="InterPro" id="IPR036465">
    <property type="entry name" value="vWFA_dom_sf"/>
</dbReference>
<dbReference type="PANTHER" id="PTHR24020">
    <property type="entry name" value="COLLAGEN ALPHA"/>
    <property type="match status" value="1"/>
</dbReference>
<dbReference type="PANTHER" id="PTHR24020:SF17">
    <property type="entry name" value="COLLAGEN ALPHA-1(XII) CHAIN"/>
    <property type="match status" value="1"/>
</dbReference>
<dbReference type="Pfam" id="PF01391">
    <property type="entry name" value="Collagen"/>
    <property type="match status" value="4"/>
</dbReference>
<dbReference type="Pfam" id="PF00041">
    <property type="entry name" value="fn3"/>
    <property type="match status" value="17"/>
</dbReference>
<dbReference type="Pfam" id="PF00092">
    <property type="entry name" value="VWA"/>
    <property type="match status" value="4"/>
</dbReference>
<dbReference type="PRINTS" id="PR00453">
    <property type="entry name" value="VWFADOMAIN"/>
</dbReference>
<dbReference type="SMART" id="SM00060">
    <property type="entry name" value="FN3"/>
    <property type="match status" value="18"/>
</dbReference>
<dbReference type="SMART" id="SM00210">
    <property type="entry name" value="TSPN"/>
    <property type="match status" value="1"/>
</dbReference>
<dbReference type="SMART" id="SM00327">
    <property type="entry name" value="VWA"/>
    <property type="match status" value="4"/>
</dbReference>
<dbReference type="SUPFAM" id="SSF49899">
    <property type="entry name" value="Concanavalin A-like lectins/glucanases"/>
    <property type="match status" value="1"/>
</dbReference>
<dbReference type="SUPFAM" id="SSF49265">
    <property type="entry name" value="Fibronectin type III"/>
    <property type="match status" value="11"/>
</dbReference>
<dbReference type="SUPFAM" id="SSF53300">
    <property type="entry name" value="vWA-like"/>
    <property type="match status" value="4"/>
</dbReference>
<dbReference type="PROSITE" id="PS50853">
    <property type="entry name" value="FN3"/>
    <property type="match status" value="18"/>
</dbReference>
<dbReference type="PROSITE" id="PS50234">
    <property type="entry name" value="VWFA"/>
    <property type="match status" value="4"/>
</dbReference>
<reference key="1">
    <citation type="journal article" date="1991" name="J. Cell Biol.">
        <title>The complete primary structure of type XII collagen shows a chimeric molecule with reiterated fibronectin type III motifs, von Willebrand factor A motifs, a domain homologous to a noncollagenous region of type IX collagen, and short collagenous domains with an Arg-Gly-Asp site.</title>
        <authorList>
            <person name="Yamagata M."/>
            <person name="Yamada K.M."/>
            <person name="Yamada S.S."/>
            <person name="Shinomura T."/>
            <person name="Tanaka H."/>
            <person name="Nishida Y."/>
            <person name="Obara M."/>
            <person name="Kimata K."/>
        </authorList>
    </citation>
    <scope>NUCLEOTIDE SEQUENCE [MRNA] (ISOFORM LONG)</scope>
    <source>
        <strain>White leghorn</strain>
        <tissue>Embryonic fibroblast</tissue>
    </source>
</reference>
<reference key="2">
    <citation type="journal article" date="1989" name="J. Biol. Chem.">
        <title>Type XII collagen. A large multidomain molecule with partial homology to type IX collagen.</title>
        <authorList>
            <person name="Gordon M.K."/>
            <person name="Gerecke D.R."/>
            <person name="Dublet B."/>
            <person name="van der Rest M."/>
            <person name="Olsen B.R."/>
        </authorList>
    </citation>
    <scope>NUCLEOTIDE SEQUENCE [MRNA] OF 2456-3124</scope>
    <scope>PROTEIN SEQUENCE OF 2772-2794 AND 2846-2873</scope>
</reference>
<reference key="3">
    <citation type="journal article" date="1987" name="Proc. Natl. Acad. Sci. U.S.A.">
        <title>Type XII collagen: distinct extracellular matrix component discovered by cDNA cloning.</title>
        <authorList>
            <person name="Gordon M.K."/>
            <person name="Gerecke D.R."/>
            <person name="Olsen B.R."/>
        </authorList>
    </citation>
    <scope>NUCLEOTIDE SEQUENCE [MRNA] OF 2960-3076</scope>
</reference>
<reference key="4">
    <citation type="journal article" date="1992" name="Biochim. Biophys. Acta">
        <title>The two splice variants of collagen XII share a common 5' end.</title>
        <authorList>
            <person name="Trueb J."/>
            <person name="Trueb B."/>
        </authorList>
    </citation>
    <scope>NUCLEOTIDE SEQUENCE [MRNA] OF 1-1283 (ISOFORM SHORT)</scope>
    <scope>ALTERNATIVE SPLICING</scope>
    <source>
        <tissue>Embryo</tissue>
    </source>
</reference>
<reference key="5">
    <citation type="journal article" date="1995" name="J. Cell Biol.">
        <title>Large and small splice variants of collagen XII: differential expression and ligand binding.</title>
        <authorList>
            <person name="Koch M."/>
            <person name="Bohrmann B."/>
            <person name="Matthison M."/>
            <person name="Hagios C."/>
            <person name="Trueb B."/>
            <person name="Chiquet M."/>
        </authorList>
    </citation>
    <scope>ALTERNATIVE SPLICING</scope>
</reference>
<sequence length="3124" mass="340582">MRTALCSAVAALCAAALLSSIEAEVNPPSDLNFTIIDEHNVQMSWKRPPDAIVGYRITVVPTNDGPTKEFTLSPSTTQTVLSDLIPEIEYVVSIASYDEVEESLPVFGQLTIQTGGPGIPEEKKVEAQIQKCSISAMTDLVFLVDGSWSVGRNNFRYILDFMVALVSAFDIGEEKTRVGVVQYSSDTRTEFNLNQYFRRSDLLDAIKRIPYKGGNTMTGEAIDYLVKNTFTESAGARKGFPKVAIVITDGKAQDEVEIPARELRNIGVEVFSLGIKAADAKELKLIASQPSLKHVFNVANFDGIVDIQNEIILQVCSGVDEQLGELVSGEEVVEPASNLVATQISSKSVRITWDPSTSQITGYRVQFIPMIAGGKQHVLSVGPQTTALNVKDLSPDTEYQINVYAMKGLTPSEPITIMEKTQQVKVQVECSRGVDVKADVVFLVDGSYSIGIANFVKVRAFLEVLVKSFEISPRKVQISLVQYSRDPHMEFSLNRYNRVKDIIQAINTFPYRGGSTNTGKAMTYVREKVFVTSKGSRPNVPRVMILITDGKSSDAFKEPAIKLRDADVEIFAVGVKDAVRTELEAIASPPAETHVYTVEDFDAFQRISFELTQSVCLRIEQELAAIRKKSYVPAKNMVFSDVTSDSFKVSWSAAGSEEKSYLIKYKVAIGGDEFIVSVPASSTSSVLTNLLPETTYAVSVIAEYEDGDGPPLDGEETTLEVKGAPRNLRITDETTDSFIVGWTPAPGNVLRYRLVYRPLTGGERRQVTVSANERSTTLRNLIPDTRYEVSVIAEYQSGPGNALNGYAKTDEVRGNPRNLRVSDATTSTTMKLSWSAAPGKVQHVLYNLHTRYAGVETKELTVKGDTTSKELKGLDEATRYALTVSALYASGAGEALSGEGETLEERGSPRNLITTDITDTTVGLSWTPAPGTVNNYRIVWKSLYDDTMGEKRVPGNTVDAVLDGLEPETKYRISIYAAYSSGEGDPVEGEAFTDVSQSARTVTVDNETENTMRVSVAALTWEGLVLARVLPNRSGGRQMFGKVNASATSIVLKRLKPRTTYDLSVVPIYDFGQGKSRKAEGTTASPFKPPRNLRTSDSTMSSFRVTWEPAPGRVKGYKVTFHPTEDDRNLGELVVGPYDSTVVLEELRAGTTYKVNVFGMFDGGESNPLVGQEMTTLSDTTTEPFLSRGLECRTRAEADIVLLVDGSWSIGRPNFKTVRNFISRIVEVFDIGPDKVQIGLAQYSGDPRTEWNLNAYRTKEALLDAVTNLPYKGGNTLTGMALDFILKNNFKQEAGLRPRARKIGVLITDGKSQDDVVTPSRRLRDEGVELYAIGIKNADENELKQIATDPDDIHAYNVADFSFLASIGEDVTTNLCNSVKGPGDLPPPSNLVISEVTPHSFRLRWSPPPESVDRYRVEYYPTTGGPPKQFYVSRMETTTVLKDLTPETEYIVNVFSVVEDESSEPLIGREITYPLSSVRNLNVYDIGSTSMRVRWEPVNGATGYLLTYEPVNATVPTTEKEMRVGPSVNEVQLVDLIPNTEYTLTAYVLYGDITSDPLTSQEVTLPLPGPRGVTIRDVTHSTMNVLWDPAPGKVRKYIIRYKIADEADVKEVEIDRLKTSTTLTDLSSQRLYNVKVVAVYDEGESLPVVASCYSAVPSPVNLRITEITKNSFRGTWDHGAPDVSLYRITWGPYGRSEKAESIVNGDVNSLLFENLNPDTLYEVSVTAIYPDESETVDDLIGSERTLPLVPITTPAPKSGPRNLQVYNATSHSLTVKWDPASGRVQRYKIIYQPINGDGPEQSTMVGGRQNSVVIQKLQPDTPYAITVSSMYADGEGGRMTGRGRTKPLTTVKNMLVYDPTTSTLNVRWDHAEGNPRQYKVFYRPTAGGAEEMTTVPGNTNYVILRSLEPNTPYTVTVVPVFPEGDGGRTTDTGRTLERGTPRNIQVYNPTPNSMNVRWEPAPGPVQQYRVNYSPLSGPRPSESIVVPANTRDVMLERLTPDTAYSINVIALYADGEGNPSQAQGRTLPRSGPRNLRVFDETTNSLSVQWDHADGPVQQYRIIYSPTVGDPIDEYTTVPGIRNNVILQPLQSDTPYKITVVAVYEDGDGGQLTGNGRTVGLLPPQNIYITDEWYTRFRVSWDPSPSPVLGYKIVYKPVGSNEPMEVFVGEVTSYTLHNLSPSTTYDVNVYAQYDSGMSIPLTDQGTTLYLNVTDLTTYKIGWDTFCIRWSPHRSATSYRLKLNPADGSRGQEITVRGSETSHCFTGLSPDTEYNATVFVQTPNLEGPPVSVREHTVLKPTEAPTPPPTPPPPPTIPPARDVCRGAKADIVFLTDASWSIGDDNFNKVVKFVFNTVGAFDLINPAGIQVSLVQYSDEAQSEFKLNTFDDKAQALGALQNVQYRGGNTRTGKALTFIKEKVLTWESGMRRGVPKVLVVVTDGRSQDEVRKAATVIQHSGFSVFVVGVADVDYNELAKIASKPSERHVFIVDDFDAFEKIQDNLVTFVCETATSTCPLIYLEGYTSPGFKMLESYNLTEKHFASVQGVSLESGSFPSYVAYRLHKNAFVSQPIREIHPEGLPQAYTIIMLFRLLPESPSEPFAIWQITDRDYKPQVGVVLDPGSKVLSFFNKDTRGEVQTVTFDNDEVKKIFYGSFHKVHIVVTSSNVKIYIDCSEILEKPIKEAGNITTDGYEILGKLLKGDRRSATLEIQNFDIVCSPVWTSRDRCCDLPSMRDEAKCPALPNACTCTQDSVGPPGPPGPPGGPGAKGPRGERGLTGSSGPPGPRGETGPPGPQGPPGPQGPNGLQIPGEPGRQGMKGDAGQPGLPGRSGTPGLPGPPGPVGPPGERGFTGKDGPTGPRGPPGPAGAPGVPGVAGPSGKPGKPGDRGTPGTPGMKGEKGDRGDIASQNMMRAVARQVCEQLINGQMSRFNQMLNQIPNDYYSNRNQPGPPGPPGPPGAAGTRGEPGPGGRPGFPGPPGVQGPPGERGMPGEKGERGTGSQGPRGLPGPPGPQGESRTGPPGSTGSRGPPGPPGRPGNAGIRGPPGPPGYCDSSQCASIPYNGQGFPEPYVPESGPYQPEGEPFIVPMESERREDEYEDYGVEMHSPEYPEHMRWKRSLSRKAKRKP</sequence>
<protein>
    <recommendedName>
        <fullName>Collagen alpha-1(XII) chain</fullName>
    </recommendedName>
    <alternativeName>
        <fullName>Fibrochimerin</fullName>
    </alternativeName>
</protein>
<proteinExistence type="evidence at protein level"/>
<comment type="function">
    <text>Type XII collagen interacts with type I collagen-containing fibrils, the COL1 domain could be associated with the surface of the fibrils, and the COL2 and NC3 domains may be localized in the perifibrillar matrix.</text>
</comment>
<comment type="subunit">
    <text>Trimer of identical chains each containing 190 kDa of non-triple-helical sequences.</text>
</comment>
<comment type="subcellular location">
    <subcellularLocation>
        <location evidence="1">Secreted</location>
        <location evidence="1">Extracellular space</location>
        <location evidence="1">Extracellular matrix</location>
    </subcellularLocation>
</comment>
<comment type="alternative products">
    <event type="alternative splicing"/>
    <isoform>
        <id>P13944-1</id>
        <name>Long</name>
        <sequence type="displayed"/>
    </isoform>
    <isoform>
        <id>P13944-2</id>
        <name>Short</name>
        <sequence type="described" ref="VSP_001148"/>
    </isoform>
    <text>The final tissue form of collagen XII may contain homotrimers of either isoform Long or isoform Short or any combination of isoform Long and isoform Short. Only isoform Long is a proteoglycan. Isoform Long has more restricted expression in embryonic tissue than isoform Short.</text>
</comment>
<comment type="tissue specificity">
    <text>Type XII collagen is present in tendons, ligaments, perichondrium, and periosteum, all dense connective tissues containing type I collagen.</text>
</comment>
<comment type="domain">
    <text>This sequence defines five distinct domains, two triple-helical domains (COL1 and COL2) and three non-triple-helical domains (NC1, NC2, and NC3).</text>
</comment>
<comment type="PTM">
    <text>The triple-helical tail is stabilized by disulfide bonds at each end.</text>
</comment>
<comment type="PTM">
    <text>Prolines at the third position of the tripeptide repeating unit (G-X-Y) are hydroxylated in some or all of the chains.</text>
</comment>
<comment type="PTM">
    <text evidence="1">O-glycosylated; glycosaminoglycan of chondroitin-sulfate type.</text>
</comment>
<comment type="similarity">
    <text evidence="8">Belongs to the fibril-associated collagens with interrupted helices (FACIT) family.</text>
</comment>
<keyword id="KW-0025">Alternative splicing</keyword>
<keyword id="KW-0130">Cell adhesion</keyword>
<keyword id="KW-0176">Collagen</keyword>
<keyword id="KW-0903">Direct protein sequencing</keyword>
<keyword id="KW-1015">Disulfide bond</keyword>
<keyword id="KW-0272">Extracellular matrix</keyword>
<keyword id="KW-0325">Glycoprotein</keyword>
<keyword id="KW-0379">Hydroxylation</keyword>
<keyword id="KW-0654">Proteoglycan</keyword>
<keyword id="KW-1185">Reference proteome</keyword>
<keyword id="KW-0677">Repeat</keyword>
<keyword id="KW-0964">Secreted</keyword>
<keyword id="KW-0732">Signal</keyword>
<gene>
    <name type="primary">COL12A1</name>
</gene>